<feature type="chain" id="PRO_0000461715" description="Peroxisomal membrane protein PEX32">
    <location>
        <begin position="1"/>
        <end position="354"/>
    </location>
</feature>
<feature type="transmembrane region" description="Helical" evidence="1">
    <location>
        <begin position="24"/>
        <end position="44"/>
    </location>
</feature>
<feature type="transmembrane region" description="Helical" evidence="1">
    <location>
        <begin position="63"/>
        <end position="83"/>
    </location>
</feature>
<feature type="transmembrane region" description="Helical" evidence="1">
    <location>
        <begin position="84"/>
        <end position="104"/>
    </location>
</feature>
<feature type="transmembrane region" description="Helical" evidence="1">
    <location>
        <begin position="151"/>
        <end position="171"/>
    </location>
</feature>
<feature type="transmembrane region" description="Helical" evidence="1">
    <location>
        <begin position="173"/>
        <end position="193"/>
    </location>
</feature>
<feature type="glycosylation site" description="N-linked (GlcNAc...) asparagine" evidence="2">
    <location>
        <position position="319"/>
    </location>
</feature>
<evidence type="ECO:0000255" key="1"/>
<evidence type="ECO:0000255" key="2">
    <source>
        <dbReference type="PROSITE-ProRule" id="PRU00498"/>
    </source>
</evidence>
<evidence type="ECO:0000269" key="3">
    <source>
    </source>
</evidence>
<evidence type="ECO:0000303" key="4">
    <source>
    </source>
</evidence>
<evidence type="ECO:0000305" key="5"/>
<comment type="function">
    <text evidence="3">With PEX24, contributes to tethering of peroxisomes to the endoplasmic reticulum for organelle biogenesis, positioning and segregation.</text>
</comment>
<comment type="subcellular location">
    <subcellularLocation>
        <location evidence="3">Peroxisome membrane</location>
        <topology evidence="1">Multi-pass membrane protein</topology>
    </subcellularLocation>
    <subcellularLocation>
        <location evidence="3">Endoplasmic reticulum membrane</location>
        <topology evidence="1">Multi-pass membrane protein</topology>
    </subcellularLocation>
    <text evidence="3">Predominantly accumulates at peroxisome-ER contact sites.</text>
</comment>
<comment type="disruption phenotype">
    <text evidence="3">Results in severe peroxisomal defects, caused by reduced peroxisome-endoplasmic reticulum contact sites (PubMed:32665322). Leads to defects in peroxisomal matrix protein import, membrane growth, as well as organelle proliferation, positioning and segregation (PubMed:32665322).</text>
</comment>
<comment type="similarity">
    <text evidence="5">Belongs to the PEX28-32 family. PEX30/31 subfamily.</text>
</comment>
<keyword id="KW-0256">Endoplasmic reticulum</keyword>
<keyword id="KW-0325">Glycoprotein</keyword>
<keyword id="KW-0472">Membrane</keyword>
<keyword id="KW-0576">Peroxisome</keyword>
<keyword id="KW-1185">Reference proteome</keyword>
<keyword id="KW-0812">Transmembrane</keyword>
<keyword id="KW-1133">Transmembrane helix</keyword>
<dbReference type="EMBL" id="AEOI02000004">
    <property type="protein sequence ID" value="ESX01870.1"/>
    <property type="molecule type" value="Genomic_DNA"/>
</dbReference>
<dbReference type="RefSeq" id="XP_013936456.1">
    <property type="nucleotide sequence ID" value="XM_014080981.1"/>
</dbReference>
<dbReference type="STRING" id="871575.W1QHP2"/>
<dbReference type="GeneID" id="25774068"/>
<dbReference type="KEGG" id="opa:HPODL_04641"/>
<dbReference type="eggNOG" id="ENOG502S05F">
    <property type="taxonomic scope" value="Eukaryota"/>
</dbReference>
<dbReference type="HOGENOM" id="CLU_016397_0_0_1"/>
<dbReference type="OMA" id="GFSRYTR"/>
<dbReference type="OrthoDB" id="5586090at2759"/>
<dbReference type="Proteomes" id="UP000008673">
    <property type="component" value="Chromosome II"/>
</dbReference>
<dbReference type="GO" id="GO:0005789">
    <property type="term" value="C:endoplasmic reticulum membrane"/>
    <property type="evidence" value="ECO:0007669"/>
    <property type="project" value="UniProtKB-SubCell"/>
</dbReference>
<dbReference type="GO" id="GO:0005778">
    <property type="term" value="C:peroxisomal membrane"/>
    <property type="evidence" value="ECO:0007669"/>
    <property type="project" value="UniProtKB-SubCell"/>
</dbReference>
<dbReference type="GO" id="GO:0007031">
    <property type="term" value="P:peroxisome organization"/>
    <property type="evidence" value="ECO:0007669"/>
    <property type="project" value="TreeGrafter"/>
</dbReference>
<dbReference type="InterPro" id="IPR006614">
    <property type="entry name" value="Peroxin/Ferlin"/>
</dbReference>
<dbReference type="InterPro" id="IPR052646">
    <property type="entry name" value="Peroxisomal_PEX28-32"/>
</dbReference>
<dbReference type="InterPro" id="IPR010482">
    <property type="entry name" value="TECPR1-like_DysF"/>
</dbReference>
<dbReference type="PANTHER" id="PTHR31679">
    <property type="entry name" value="PEROXISOMAL MEMBRANE PROTEIN PEX30-RELATED"/>
    <property type="match status" value="1"/>
</dbReference>
<dbReference type="PANTHER" id="PTHR31679:SF2">
    <property type="entry name" value="PEROXISOMAL MEMBRANE PROTEIN PEX30-RELATED"/>
    <property type="match status" value="1"/>
</dbReference>
<dbReference type="Pfam" id="PF06398">
    <property type="entry name" value="Pex24p"/>
    <property type="match status" value="1"/>
</dbReference>
<dbReference type="SMART" id="SM00693">
    <property type="entry name" value="DysFN"/>
    <property type="match status" value="1"/>
</dbReference>
<name>PEX32_OGAPD</name>
<proteinExistence type="inferred from homology"/>
<reference key="1">
    <citation type="journal article" date="2013" name="BMC Genomics">
        <title>Genome sequence and analysis of methylotrophic yeast Hansenula polymorpha DL1.</title>
        <authorList>
            <person name="Ravin N.V."/>
            <person name="Eldarov M.A."/>
            <person name="Kadnikov V.V."/>
            <person name="Beletsky A.V."/>
            <person name="Schneider J."/>
            <person name="Mardanova E.S."/>
            <person name="Smekalova E.M."/>
            <person name="Zvereva M.I."/>
            <person name="Dontsova O.A."/>
            <person name="Mardanov A.V."/>
            <person name="Skryabin K.G."/>
        </authorList>
    </citation>
    <scope>NUCLEOTIDE SEQUENCE [LARGE SCALE GENOMIC DNA]</scope>
    <source>
        <strain>ATCC 26012 / BCRC 20466 / JCM 22074 / NRRL Y-7560 / DL-1</strain>
    </source>
</reference>
<reference key="2">
    <citation type="journal article" date="2020" name="J. Cell Sci.">
        <title>Pex24 and Pex32 are required to tether peroxisomes to the ER for organelle biogenesis, positioning and segregation in yeast.</title>
        <authorList>
            <person name="Wu F."/>
            <person name="de Boer R."/>
            <person name="Krikken A.M."/>
            <person name="Aksit A."/>
            <person name="Bordin N."/>
            <person name="Devos D.P."/>
            <person name="van der Klei I.J."/>
        </authorList>
    </citation>
    <scope>FUNCTION</scope>
    <scope>DISRUPTION PHENOTYPE</scope>
    <scope>SUBCELLULAR LOCATION</scope>
</reference>
<accession>W1QHP2</accession>
<gene>
    <name evidence="4" type="primary">PEX32</name>
    <name type="ORF">HPODL_04641</name>
</gene>
<protein>
    <recommendedName>
        <fullName evidence="4">Peroxisomal membrane protein PEX32</fullName>
    </recommendedName>
    <alternativeName>
        <fullName evidence="5">Peroxin-32</fullName>
    </alternativeName>
</protein>
<organism>
    <name type="scientific">Ogataea parapolymorpha (strain ATCC 26012 / BCRC 20466 / JCM 22074 / NRRL Y-7560 / DL-1)</name>
    <name type="common">Yeast</name>
    <name type="synonym">Hansenula polymorpha</name>
    <dbReference type="NCBI Taxonomy" id="871575"/>
    <lineage>
        <taxon>Eukaryota</taxon>
        <taxon>Fungi</taxon>
        <taxon>Dikarya</taxon>
        <taxon>Ascomycota</taxon>
        <taxon>Saccharomycotina</taxon>
        <taxon>Pichiomycetes</taxon>
        <taxon>Pichiales</taxon>
        <taxon>Pichiaceae</taxon>
        <taxon>Ogataea</taxon>
    </lineage>
</organism>
<sequence length="354" mass="40815">MSEPNVRASFADNRRPLSKTKGQLLNMPPVITTALYTAFPVIFLLDKVLAFLTWTNDDPYTNFIAIAIYIMVVKYWTVVACTVLPTIIALGTCASLWFLKTTIDDLRSETAPPTIEEIIDTLINMQARFSYIVEPFSYFGSLSGSDYFNLGFSLIAITPCYIWLMTRIFTVRSFLLVFGVAWLSFHSSWSVATRHLLWRSIVIRKILTFTTGLKFSLVDKNIELTVLNDFQISNVGTGKTVEFHILQNQRRWLGVGWSNTLLPFERGPFTTEDLEKSWDSLESFQFPEITQATCRWRWLDANWKTDDSFAPGEGWIYYNNSWEEPSNTDSLTRFTRTKRWKRRALVIVEDDGTT</sequence>